<feature type="chain" id="PRO_0000452436" description="Protein adenylyltransferase MntA">
    <location>
        <begin position="1"/>
        <end position="139"/>
    </location>
</feature>
<feature type="short sequence motif" description="GSX(10)DXD motif" evidence="3">
    <location>
        <begin position="27"/>
        <end position="41"/>
    </location>
</feature>
<feature type="binding site" evidence="3 11">
    <location>
        <position position="39"/>
    </location>
    <ligand>
        <name>Mg(2+)</name>
        <dbReference type="ChEBI" id="CHEBI:18420"/>
        <label>1</label>
    </ligand>
</feature>
<feature type="binding site" evidence="3 11">
    <location>
        <position position="39"/>
    </location>
    <ligand>
        <name>Mg(2+)</name>
        <dbReference type="ChEBI" id="CHEBI:18420"/>
        <label>2</label>
    </ligand>
</feature>
<feature type="binding site" evidence="3 11">
    <location>
        <position position="41"/>
    </location>
    <ligand>
        <name>Mg(2+)</name>
        <dbReference type="ChEBI" id="CHEBI:18420"/>
        <label>1</label>
    </ligand>
</feature>
<feature type="binding site" evidence="3 11">
    <location>
        <position position="41"/>
    </location>
    <ligand>
        <name>Mg(2+)</name>
        <dbReference type="ChEBI" id="CHEBI:18420"/>
        <label>2</label>
    </ligand>
</feature>
<feature type="binding site" evidence="3 11">
    <location>
        <position position="71"/>
    </location>
    <ligand>
        <name>Mg(2+)</name>
        <dbReference type="ChEBI" id="CHEBI:18420"/>
        <label>1</label>
    </ligand>
</feature>
<feature type="mutagenesis site" description="No longer AMPylates HepT, reduced ability to neutralize HepT." evidence="3">
    <original>GS</original>
    <variation>AT</variation>
    <location>
        <begin position="27"/>
        <end position="28"/>
    </location>
</feature>
<feature type="mutagenesis site" description="No longer AMPylates HepT, reduced ability to neutralize HepT, still binds HepT." evidence="3">
    <original>DID</original>
    <variation>EIE</variation>
    <location>
        <begin position="39"/>
        <end position="41"/>
    </location>
</feature>
<feature type="mutagenesis site" description="Significantly reduces antitoxin function, reduced ability to neutralize HepT, decreased ability to AMPylate HepT." evidence="2">
    <location>
        <begin position="98"/>
        <end position="113"/>
    </location>
</feature>
<feature type="helix" evidence="12">
    <location>
        <begin position="6"/>
        <end position="16"/>
    </location>
</feature>
<feature type="strand" evidence="12">
    <location>
        <begin position="20"/>
        <end position="26"/>
    </location>
</feature>
<feature type="turn" evidence="12">
    <location>
        <begin position="27"/>
        <end position="30"/>
    </location>
</feature>
<feature type="strand" evidence="12">
    <location>
        <begin position="40"/>
        <end position="48"/>
    </location>
</feature>
<feature type="helix" evidence="12">
    <location>
        <begin position="52"/>
        <end position="66"/>
    </location>
</feature>
<feature type="strand" evidence="12">
    <location>
        <begin position="70"/>
        <end position="74"/>
    </location>
</feature>
<feature type="turn" evidence="12">
    <location>
        <begin position="75"/>
        <end position="77"/>
    </location>
</feature>
<feature type="helix" evidence="12">
    <location>
        <begin position="80"/>
        <end position="89"/>
    </location>
</feature>
<feature type="strand" evidence="12">
    <location>
        <begin position="91"/>
        <end position="95"/>
    </location>
</feature>
<feature type="helix" evidence="12">
    <location>
        <begin position="97"/>
        <end position="125"/>
    </location>
</feature>
<reference key="1">
    <citation type="journal article" date="2002" name="Nat. Biotechnol.">
        <title>Genome sequence of the dissimilatory metal ion-reducing bacterium Shewanella oneidensis.</title>
        <authorList>
            <person name="Heidelberg J.F."/>
            <person name="Paulsen I.T."/>
            <person name="Nelson K.E."/>
            <person name="Gaidos E.J."/>
            <person name="Nelson W.C."/>
            <person name="Read T.D."/>
            <person name="Eisen J.A."/>
            <person name="Seshadri R."/>
            <person name="Ward N.L."/>
            <person name="Methe B.A."/>
            <person name="Clayton R.A."/>
            <person name="Meyer T."/>
            <person name="Tsapin A."/>
            <person name="Scott J."/>
            <person name="Beanan M.J."/>
            <person name="Brinkac L.M."/>
            <person name="Daugherty S.C."/>
            <person name="DeBoy R.T."/>
            <person name="Dodson R.J."/>
            <person name="Durkin A.S."/>
            <person name="Haft D.H."/>
            <person name="Kolonay J.F."/>
            <person name="Madupu R."/>
            <person name="Peterson J.D."/>
            <person name="Umayam L.A."/>
            <person name="White O."/>
            <person name="Wolf A.M."/>
            <person name="Vamathevan J.J."/>
            <person name="Weidman J.F."/>
            <person name="Impraim M."/>
            <person name="Lee K."/>
            <person name="Berry K.J."/>
            <person name="Lee C."/>
            <person name="Mueller J."/>
            <person name="Khouri H.M."/>
            <person name="Gill J."/>
            <person name="Utterback T.R."/>
            <person name="McDonald L.A."/>
            <person name="Feldblyum T.V."/>
            <person name="Smith H.O."/>
            <person name="Venter J.C."/>
            <person name="Nealson K.H."/>
            <person name="Fraser C.M."/>
        </authorList>
    </citation>
    <scope>NUCLEOTIDE SEQUENCE [LARGE SCALE GENOMIC DNA]</scope>
    <source>
        <strain>ATCC 700550 / JCM 31522 / CIP 106686 / LMG 19005 / NCIMB 14063 / MR-1</strain>
    </source>
</reference>
<reference key="2">
    <citation type="journal article" date="2015" name="Microb. Biotechnol.">
        <title>Identification and characterization of a HEPN-MNT family type II toxin-antitoxin in Shewanella oneidensis.</title>
        <authorList>
            <person name="Yao J."/>
            <person name="Guo Y."/>
            <person name="Zeng Z."/>
            <person name="Liu X."/>
            <person name="Shi F."/>
            <person name="Wang X."/>
        </authorList>
    </citation>
    <scope>FUNCTION AS AN ANTITOXIN</scope>
    <scope>POSSIBLE FUNCTION AS A REPRESSOR</scope>
    <scope>SUBUNIT</scope>
    <scope>INDUCTION</scope>
    <scope>DISRUPTION PHENOTYPE</scope>
    <source>
        <strain>ATCC 700550 / JCM 31522 / CIP 106686 / LMG 19005 / NCIMB 14063 / MR-1</strain>
    </source>
</reference>
<reference evidence="6" key="3">
    <citation type="journal article" date="2018" name="J. Biol. Chem.">
        <title>Structure-function analyses reveal the molecular architecture and neutralization mechanism of a bacterial HEPN-MNT toxin-antitoxin system.</title>
        <authorList>
            <person name="Jia X."/>
            <person name="Yao J."/>
            <person name="Gao Z."/>
            <person name="Liu G."/>
            <person name="Dong Y.H."/>
            <person name="Wang X."/>
            <person name="Zhang H."/>
        </authorList>
    </citation>
    <scope>X-RAY CRYSTALLOGRAPHY (3.00 ANGSTROMS) IN COMPLEX WITH HEPT</scope>
    <scope>FUNCTION AS AN ANTITOXIN</scope>
    <scope>SUBUNIT</scope>
    <scope>DOMAIN</scope>
    <scope>MUTAGENESIS OF 98-GLN--HIS-113</scope>
    <source>
        <strain>ATCC 700550 / JCM 31522 / CIP 106686 / LMG 19005 / NCIMB 14063 / MR-1</strain>
    </source>
</reference>
<reference evidence="7 8 9 11" key="4">
    <citation type="journal article" date="2020" name="Nucleic Acids Res.">
        <title>Novel polyadenylylation-dependent neutralization mechanism of the HEPN/MNT toxin/antitoxin system.</title>
        <authorList>
            <person name="Yao J."/>
            <person name="Zhen X."/>
            <person name="Tang K."/>
            <person name="Liu T."/>
            <person name="Xu X."/>
            <person name="Chen Z."/>
            <person name="Guo Y."/>
            <person name="Liu X."/>
            <person name="Wood T.K."/>
            <person name="Ouyang S."/>
            <person name="Wang X."/>
        </authorList>
    </citation>
    <scope>X-RAY CRYSTALLOGRAPHY (2.61 ANGSTROMS) IN COMPLEX WITH HEPT AND MAGNESIUM</scope>
    <scope>FUNCTION AS AN ANTITOXIN</scope>
    <scope>FUNCTION AS AN ADENYLYLTRANSFERASE</scope>
    <scope>CATALYTIC ACTIVITY</scope>
    <scope>COFACTOR</scope>
    <scope>SUBUNIT</scope>
    <scope>MUTAGENESIS OF 27-GLY-SER-28 AND 39-ASP--ASP-41</scope>
    <source>
        <strain>ATCC 700550 / JCM 31522 / CIP 106686 / LMG 19005 / NCIMB 14063 / MR-1</strain>
    </source>
</reference>
<reference evidence="10" key="5">
    <citation type="journal article" date="2020" name="Mol. Cell">
        <title>HEPN-MNT Toxin-Antitoxin System: The HEPN Ribonuclease Is Neutralized by OligoAMPylation.</title>
        <authorList>
            <person name="Songailiene I."/>
            <person name="Juozapaitis J."/>
            <person name="Tamulaitiene G."/>
            <person name="Ruksenaite A."/>
            <person name="Sulcius S."/>
            <person name="Sasnauskas G."/>
            <person name="Venclovas C."/>
            <person name="Siksnys V."/>
        </authorList>
    </citation>
    <scope>X-RAY CRYSTALLOGRAPHY (3.00 ANGSTROMS) IN COMPLEX WITH HEPT</scope>
    <source>
        <strain>ATCC 700550 / JCM 31522 / CIP 106686 / LMG 19005 / NCIMB 14063 / MR-1</strain>
    </source>
</reference>
<name>MNTA_SHEON</name>
<accession>Q8ECH7</accession>
<proteinExistence type="evidence at protein level"/>
<comment type="function">
    <text evidence="1 2 3">Antitoxin component of a type VII toxin-antitoxin (TA) system. Upon overexpression in situ or in E.coli neutralizes the effect of cognate toxin HepT (PubMed:26112399, PubMed:29555683, PubMed:33045733). Neutralization is mostly due to tri-AMPylation of toxin by this enzyme. Successively tri-AMPylates HepT on 'Tyr-104' (PubMed:33045733). Binds its own promoter, probably repressing its expression. The TA system confers plasmid stability in E.coli (PubMed:26112399).</text>
</comment>
<comment type="catalytic activity">
    <reaction evidence="3">
        <text>L-tyrosyl-[protein] + ATP = O-(5'-adenylyl)-L-tyrosyl-[protein] + diphosphate</text>
        <dbReference type="Rhea" id="RHEA:54288"/>
        <dbReference type="Rhea" id="RHEA-COMP:10136"/>
        <dbReference type="Rhea" id="RHEA-COMP:13846"/>
        <dbReference type="ChEBI" id="CHEBI:30616"/>
        <dbReference type="ChEBI" id="CHEBI:33019"/>
        <dbReference type="ChEBI" id="CHEBI:46858"/>
        <dbReference type="ChEBI" id="CHEBI:83624"/>
        <dbReference type="EC" id="2.7.7.108"/>
    </reaction>
</comment>
<comment type="catalytic activity">
    <reaction evidence="3">
        <text>O-(5'-adenylyl)-L-tyrosyl-[protein] + ATP = O-[5'-(adenylyl-(5'-&gt;3')-adenylyl)]-L-tyrosyl-[protein] + diphosphate</text>
        <dbReference type="Rhea" id="RHEA:66528"/>
        <dbReference type="Rhea" id="RHEA-COMP:13846"/>
        <dbReference type="Rhea" id="RHEA-COMP:17046"/>
        <dbReference type="ChEBI" id="CHEBI:30616"/>
        <dbReference type="ChEBI" id="CHEBI:33019"/>
        <dbReference type="ChEBI" id="CHEBI:83624"/>
        <dbReference type="ChEBI" id="CHEBI:167160"/>
    </reaction>
</comment>
<comment type="catalytic activity">
    <reaction evidence="3">
        <text>O-[5'-(adenylyl-(5'-&gt;3')-adenylyl)]-L-tyrosyl-[protein] + ATP = O-[5'-(adenylyl-(5'-&gt;3')-adenylyl-(5'-&gt;3')-adenylyl)]-L-tyrosyl-[protein] + diphosphate</text>
        <dbReference type="Rhea" id="RHEA:66532"/>
        <dbReference type="Rhea" id="RHEA-COMP:17046"/>
        <dbReference type="Rhea" id="RHEA-COMP:17047"/>
        <dbReference type="ChEBI" id="CHEBI:30616"/>
        <dbReference type="ChEBI" id="CHEBI:33019"/>
        <dbReference type="ChEBI" id="CHEBI:167160"/>
        <dbReference type="ChEBI" id="CHEBI:167161"/>
    </reaction>
</comment>
<comment type="cofactor">
    <cofactor evidence="3">
        <name>Mg(2+)</name>
        <dbReference type="ChEBI" id="CHEBI:18420"/>
    </cofactor>
    <text evidence="3">Binds 2 Mg(2+) per subunit.</text>
</comment>
<comment type="subunit">
    <text evidence="1 2">Forms a complex with cognate toxin HepT, may form a homodimer by itself (PubMed:26112399). Forms a heterooctamer with cognate toxin HEPN with stoichiometry HepT(6):MntA(2). The 2 MNT subunits do not contact each other in the heterooctamer, each contacts 3 HEPN subunits, blocking access to the toxin active site (PubMed:29555683).</text>
</comment>
<comment type="induction">
    <text evidence="1">Expressed during exponential growth, part of the mntA-hepT operon. Under autocontrol by MntA.</text>
</comment>
<comment type="domain">
    <text evidence="2">Has 2 alpha-helices that are important for interaction with cognate toxin HEPN; deletion of helix 2 (residues 52-65) or the C-terminus of helix 4 (residues 114-125) reduces antitoxin function about 100-fold, while deletion of the N-terminus of helix 4 (residues 98-113) reduces antitoxin function over 1000-fold.</text>
</comment>
<comment type="disruption phenotype">
    <text evidence="1">When mntA-hepT is deleted, has a sight reduction in swimming motility. This gene cannot be deleted when the hepT gene is intact.</text>
</comment>
<comment type="similarity">
    <text evidence="5">Belongs to the MntA antitoxin family.</text>
</comment>
<dbReference type="EC" id="2.7.7.108" evidence="3"/>
<dbReference type="EMBL" id="AE014299">
    <property type="protein sequence ID" value="AAN56165.1"/>
    <property type="molecule type" value="Genomic_DNA"/>
</dbReference>
<dbReference type="RefSeq" id="NP_718721.1">
    <property type="nucleotide sequence ID" value="NC_004347.2"/>
</dbReference>
<dbReference type="RefSeq" id="WP_011073052.1">
    <property type="nucleotide sequence ID" value="NC_004347.2"/>
</dbReference>
<dbReference type="PDB" id="5YEP">
    <property type="method" value="X-ray"/>
    <property type="resolution" value="3.00 A"/>
    <property type="chains" value="A=1-139"/>
</dbReference>
<dbReference type="PDB" id="6M6U">
    <property type="method" value="X-ray"/>
    <property type="resolution" value="2.35 A"/>
    <property type="chains" value="A/F=1-139"/>
</dbReference>
<dbReference type="PDB" id="6M6V">
    <property type="method" value="X-ray"/>
    <property type="resolution" value="3.08 A"/>
    <property type="chains" value="A=1-139"/>
</dbReference>
<dbReference type="PDB" id="6M6W">
    <property type="method" value="X-ray"/>
    <property type="resolution" value="2.61 A"/>
    <property type="chains" value="A/F=1-139"/>
</dbReference>
<dbReference type="PDB" id="7AER">
    <property type="method" value="X-ray"/>
    <property type="resolution" value="3.00 A"/>
    <property type="chains" value="A=1-139"/>
</dbReference>
<dbReference type="PDB" id="7BXO">
    <property type="method" value="X-ray"/>
    <property type="resolution" value="2.77 A"/>
    <property type="chains" value="A/E=1-139"/>
</dbReference>
<dbReference type="PDBsum" id="5YEP"/>
<dbReference type="PDBsum" id="6M6U"/>
<dbReference type="PDBsum" id="6M6V"/>
<dbReference type="PDBsum" id="6M6W"/>
<dbReference type="PDBsum" id="7AER"/>
<dbReference type="PDBsum" id="7BXO"/>
<dbReference type="SMR" id="Q8ECH7"/>
<dbReference type="STRING" id="211586.SO_3165"/>
<dbReference type="PaxDb" id="211586-SO_3165"/>
<dbReference type="DNASU" id="1170859"/>
<dbReference type="KEGG" id="son:SO_3165"/>
<dbReference type="PATRIC" id="fig|211586.12.peg.3070"/>
<dbReference type="eggNOG" id="COG1669">
    <property type="taxonomic scope" value="Bacteria"/>
</dbReference>
<dbReference type="HOGENOM" id="CLU_130257_1_0_6"/>
<dbReference type="OrthoDB" id="9793109at2"/>
<dbReference type="BioCyc" id="SONE211586:G1GMP-2944-MONOMER"/>
<dbReference type="Proteomes" id="UP000008186">
    <property type="component" value="Chromosome"/>
</dbReference>
<dbReference type="GO" id="GO:0005524">
    <property type="term" value="F:ATP binding"/>
    <property type="evidence" value="ECO:0007669"/>
    <property type="project" value="UniProtKB-KW"/>
</dbReference>
<dbReference type="GO" id="GO:0003677">
    <property type="term" value="F:DNA binding"/>
    <property type="evidence" value="ECO:0007669"/>
    <property type="project" value="UniProtKB-KW"/>
</dbReference>
<dbReference type="GO" id="GO:0046872">
    <property type="term" value="F:metal ion binding"/>
    <property type="evidence" value="ECO:0007669"/>
    <property type="project" value="UniProtKB-KW"/>
</dbReference>
<dbReference type="GO" id="GO:0016779">
    <property type="term" value="F:nucleotidyltransferase activity"/>
    <property type="evidence" value="ECO:0007669"/>
    <property type="project" value="UniProtKB-KW"/>
</dbReference>
<dbReference type="CDD" id="cd05403">
    <property type="entry name" value="NT_KNTase_like"/>
    <property type="match status" value="1"/>
</dbReference>
<dbReference type="Gene3D" id="3.30.460.10">
    <property type="entry name" value="Beta Polymerase, domain 2"/>
    <property type="match status" value="1"/>
</dbReference>
<dbReference type="InterPro" id="IPR043519">
    <property type="entry name" value="NT_sf"/>
</dbReference>
<dbReference type="InterPro" id="IPR041633">
    <property type="entry name" value="Polbeta"/>
</dbReference>
<dbReference type="InterPro" id="IPR052930">
    <property type="entry name" value="TA_antitoxin_MntA"/>
</dbReference>
<dbReference type="NCBIfam" id="NF047752">
    <property type="entry name" value="MntA_antitoxin"/>
    <property type="match status" value="1"/>
</dbReference>
<dbReference type="PANTHER" id="PTHR43852">
    <property type="entry name" value="NUCLEOTIDYLTRANSFERASE"/>
    <property type="match status" value="1"/>
</dbReference>
<dbReference type="PANTHER" id="PTHR43852:SF2">
    <property type="entry name" value="PROTEIN ADENYLYLTRANSFERASE MNTA"/>
    <property type="match status" value="1"/>
</dbReference>
<dbReference type="Pfam" id="PF18765">
    <property type="entry name" value="Polbeta"/>
    <property type="match status" value="1"/>
</dbReference>
<dbReference type="SUPFAM" id="SSF81301">
    <property type="entry name" value="Nucleotidyltransferase"/>
    <property type="match status" value="1"/>
</dbReference>
<organism>
    <name type="scientific">Shewanella oneidensis (strain ATCC 700550 / JCM 31522 / CIP 106686 / LMG 19005 / NCIMB 14063 / MR-1)</name>
    <dbReference type="NCBI Taxonomy" id="211586"/>
    <lineage>
        <taxon>Bacteria</taxon>
        <taxon>Pseudomonadati</taxon>
        <taxon>Pseudomonadota</taxon>
        <taxon>Gammaproteobacteria</taxon>
        <taxon>Alteromonadales</taxon>
        <taxon>Shewanellaceae</taxon>
        <taxon>Shewanella</taxon>
    </lineage>
</organism>
<evidence type="ECO:0000269" key="1">
    <source>
    </source>
</evidence>
<evidence type="ECO:0000269" key="2">
    <source>
    </source>
</evidence>
<evidence type="ECO:0000269" key="3">
    <source>
    </source>
</evidence>
<evidence type="ECO:0000303" key="4">
    <source>
    </source>
</evidence>
<evidence type="ECO:0000305" key="5"/>
<evidence type="ECO:0007744" key="6">
    <source>
        <dbReference type="PDB" id="5YEP"/>
    </source>
</evidence>
<evidence type="ECO:0007744" key="7">
    <source>
        <dbReference type="PDB" id="6M6U"/>
    </source>
</evidence>
<evidence type="ECO:0007744" key="8">
    <source>
        <dbReference type="PDB" id="6M6V"/>
    </source>
</evidence>
<evidence type="ECO:0007744" key="9">
    <source>
        <dbReference type="PDB" id="6M6W"/>
    </source>
</evidence>
<evidence type="ECO:0007744" key="10">
    <source>
        <dbReference type="PDB" id="7AER"/>
    </source>
</evidence>
<evidence type="ECO:0007744" key="11">
    <source>
        <dbReference type="PDB" id="7BXO"/>
    </source>
</evidence>
<evidence type="ECO:0007829" key="12">
    <source>
        <dbReference type="PDB" id="6M6U"/>
    </source>
</evidence>
<protein>
    <recommendedName>
        <fullName>Protein adenylyltransferase MntA</fullName>
        <ecNumber evidence="3">2.7.7.108</ecNumber>
    </recommendedName>
    <alternativeName>
        <fullName evidence="4">Antitoxin MntA</fullName>
    </alternativeName>
</protein>
<keyword id="KW-0002">3D-structure</keyword>
<keyword id="KW-0067">ATP-binding</keyword>
<keyword id="KW-0238">DNA-binding</keyword>
<keyword id="KW-0460">Magnesium</keyword>
<keyword id="KW-0479">Metal-binding</keyword>
<keyword id="KW-0547">Nucleotide-binding</keyword>
<keyword id="KW-0548">Nucleotidyltransferase</keyword>
<keyword id="KW-1185">Reference proteome</keyword>
<keyword id="KW-0678">Repressor</keyword>
<keyword id="KW-1277">Toxin-antitoxin system</keyword>
<keyword id="KW-0804">Transcription</keyword>
<keyword id="KW-0805">Transcription regulation</keyword>
<keyword id="KW-0808">Transferase</keyword>
<gene>
    <name evidence="4" type="primary">mntA</name>
    <name type="ordered locus">SO_3165</name>
</gene>
<sequence length="139" mass="15567">MQQLNENKIIKLLRDNIPKLQLIYLFGSYSQGTQHRNSDIDIAVLAADTLDNIARWELAQKLASALDSDVDLVDLRSASTVLCQQVVTQGKQLWGTQQDDELFAVKTISMYQHLQAERQAIIDDVMANTAAKAHRGESL</sequence>